<dbReference type="EMBL" id="X53231">
    <property type="protein sequence ID" value="CAA37323.1"/>
    <property type="molecule type" value="mRNA"/>
</dbReference>
<dbReference type="PIR" id="A36119">
    <property type="entry name" value="A36119"/>
</dbReference>
<dbReference type="PaxDb" id="10116-ENSRNOP00000005162"/>
<dbReference type="AGR" id="RGD:68418"/>
<dbReference type="RGD" id="68951">
    <property type="gene designation" value="Porf1"/>
</dbReference>
<dbReference type="HOGENOM" id="CLU_3350927_0_0_1"/>
<dbReference type="InParanoid" id="P18889"/>
<dbReference type="PRO" id="PR:P18889"/>
<dbReference type="Proteomes" id="UP000002494">
    <property type="component" value="Chromosome 6"/>
</dbReference>
<dbReference type="Bgee" id="ENSRNOG00000003891">
    <property type="expression patterns" value="Expressed in frontal cortex and 10 other cell types or tissues"/>
</dbReference>
<dbReference type="GO" id="GO:0005576">
    <property type="term" value="C:extracellular region"/>
    <property type="evidence" value="ECO:0007669"/>
    <property type="project" value="UniProtKB-SubCell"/>
</dbReference>
<dbReference type="GO" id="GO:0005179">
    <property type="term" value="F:hormone activity"/>
    <property type="evidence" value="ECO:0007669"/>
    <property type="project" value="UniProtKB-KW"/>
</dbReference>
<evidence type="ECO:0000305" key="1"/>
<reference key="1">
    <citation type="journal article" date="1990" name="Mol. Endocrinol.">
        <title>Cloning of two hypothalamic cDNAs encoding tissue-specific transcripts in the preoptic area and testis.</title>
        <authorList>
            <person name="Nowak F.V."/>
        </authorList>
    </citation>
    <scope>NUCLEOTIDE SEQUENCE [MRNA]</scope>
    <source>
        <tissue>Preoptic area of hypothalamus</tissue>
    </source>
</reference>
<proteinExistence type="evidence at transcript level"/>
<comment type="function">
    <text>Precursor for a gonadotropin regulatory hormone (GNRH) related decapeptide.</text>
</comment>
<comment type="subcellular location">
    <subcellularLocation>
        <location evidence="1">Secreted</location>
    </subcellularLocation>
</comment>
<comment type="tissue specificity">
    <text>Preoptic area and testis.</text>
</comment>
<comment type="similarity">
    <text evidence="1">Belongs to the GnRH family.</text>
</comment>
<organism>
    <name type="scientific">Rattus norvegicus</name>
    <name type="common">Rat</name>
    <dbReference type="NCBI Taxonomy" id="10116"/>
    <lineage>
        <taxon>Eukaryota</taxon>
        <taxon>Metazoa</taxon>
        <taxon>Chordata</taxon>
        <taxon>Craniata</taxon>
        <taxon>Vertebrata</taxon>
        <taxon>Euteleostomi</taxon>
        <taxon>Mammalia</taxon>
        <taxon>Eutheria</taxon>
        <taxon>Euarchontoglires</taxon>
        <taxon>Glires</taxon>
        <taxon>Rodentia</taxon>
        <taxon>Myomorpha</taxon>
        <taxon>Muroidea</taxon>
        <taxon>Muridae</taxon>
        <taxon>Murinae</taxon>
        <taxon>Rattus</taxon>
    </lineage>
</organism>
<protein>
    <recommendedName>
        <fullName>Putative preoptic regulatory factor 1</fullName>
        <shortName>PORF-1</shortName>
    </recommendedName>
</protein>
<keyword id="KW-0372">Hormone</keyword>
<keyword id="KW-1185">Reference proteome</keyword>
<keyword id="KW-0964">Secreted</keyword>
<name>PORF1_RAT</name>
<feature type="propeptide" id="PRO_0000012553">
    <location>
        <begin position="1"/>
        <end position="7"/>
    </location>
</feature>
<feature type="peptide" id="PRO_0000012554" description="Putative preoptic regulatory factor 1">
    <location>
        <begin position="8"/>
        <end position="17"/>
    </location>
</feature>
<feature type="propeptide" id="PRO_0000012555">
    <location>
        <begin position="18"/>
        <end position="37"/>
    </location>
</feature>
<sequence>MPYSLQPQPEGFADVPGFPLCMYMVRGSTWTLVPPDL</sequence>
<accession>P18889</accession>
<gene>
    <name type="primary">Porf1</name>
</gene>